<proteinExistence type="inferred from homology"/>
<protein>
    <recommendedName>
        <fullName evidence="1">Chaperone protein DnaK</fullName>
    </recommendedName>
    <alternativeName>
        <fullName evidence="1">HSP70</fullName>
    </alternativeName>
    <alternativeName>
        <fullName evidence="1">Heat shock 70 kDa protein</fullName>
    </alternativeName>
    <alternativeName>
        <fullName evidence="1">Heat shock protein 70</fullName>
    </alternativeName>
</protein>
<accession>B6JCI3</accession>
<accession>F8BRE2</accession>
<organism>
    <name type="scientific">Afipia carboxidovorans (strain ATCC 49405 / DSM 1227 / KCTC 32145 / OM5)</name>
    <name type="common">Oligotropha carboxidovorans</name>
    <dbReference type="NCBI Taxonomy" id="504832"/>
    <lineage>
        <taxon>Bacteria</taxon>
        <taxon>Pseudomonadati</taxon>
        <taxon>Pseudomonadota</taxon>
        <taxon>Alphaproteobacteria</taxon>
        <taxon>Hyphomicrobiales</taxon>
        <taxon>Nitrobacteraceae</taxon>
        <taxon>Afipia</taxon>
    </lineage>
</organism>
<dbReference type="EMBL" id="CP001196">
    <property type="protein sequence ID" value="ACI91563.1"/>
    <property type="molecule type" value="Genomic_DNA"/>
</dbReference>
<dbReference type="EMBL" id="CP002826">
    <property type="protein sequence ID" value="AEI04846.1"/>
    <property type="molecule type" value="Genomic_DNA"/>
</dbReference>
<dbReference type="RefSeq" id="WP_012561594.1">
    <property type="nucleotide sequence ID" value="NC_015684.1"/>
</dbReference>
<dbReference type="SMR" id="B6JCI3"/>
<dbReference type="STRING" id="504832.OCA5_c01140"/>
<dbReference type="KEGG" id="oca:OCAR_4417"/>
<dbReference type="KEGG" id="ocg:OCA5_c01140"/>
<dbReference type="PATRIC" id="fig|504832.7.peg.121"/>
<dbReference type="eggNOG" id="COG0443">
    <property type="taxonomic scope" value="Bacteria"/>
</dbReference>
<dbReference type="HOGENOM" id="CLU_005965_2_1_5"/>
<dbReference type="OrthoDB" id="9766019at2"/>
<dbReference type="Proteomes" id="UP000007730">
    <property type="component" value="Chromosome"/>
</dbReference>
<dbReference type="GO" id="GO:0005524">
    <property type="term" value="F:ATP binding"/>
    <property type="evidence" value="ECO:0007669"/>
    <property type="project" value="UniProtKB-UniRule"/>
</dbReference>
<dbReference type="GO" id="GO:0140662">
    <property type="term" value="F:ATP-dependent protein folding chaperone"/>
    <property type="evidence" value="ECO:0007669"/>
    <property type="project" value="InterPro"/>
</dbReference>
<dbReference type="GO" id="GO:0051082">
    <property type="term" value="F:unfolded protein binding"/>
    <property type="evidence" value="ECO:0007669"/>
    <property type="project" value="InterPro"/>
</dbReference>
<dbReference type="CDD" id="cd11733">
    <property type="entry name" value="ASKHA_NBD_HSP70_HSPA9"/>
    <property type="match status" value="1"/>
</dbReference>
<dbReference type="FunFam" id="2.60.34.10:FF:000014">
    <property type="entry name" value="Chaperone protein DnaK HSP70"/>
    <property type="match status" value="1"/>
</dbReference>
<dbReference type="FunFam" id="1.20.1270.10:FF:000001">
    <property type="entry name" value="Molecular chaperone DnaK"/>
    <property type="match status" value="1"/>
</dbReference>
<dbReference type="FunFam" id="3.30.420.40:FF:000004">
    <property type="entry name" value="Molecular chaperone DnaK"/>
    <property type="match status" value="1"/>
</dbReference>
<dbReference type="FunFam" id="3.90.640.10:FF:000003">
    <property type="entry name" value="Molecular chaperone DnaK"/>
    <property type="match status" value="1"/>
</dbReference>
<dbReference type="Gene3D" id="1.20.1270.10">
    <property type="match status" value="1"/>
</dbReference>
<dbReference type="Gene3D" id="3.30.420.40">
    <property type="match status" value="2"/>
</dbReference>
<dbReference type="Gene3D" id="3.90.640.10">
    <property type="entry name" value="Actin, Chain A, domain 4"/>
    <property type="match status" value="1"/>
</dbReference>
<dbReference type="Gene3D" id="2.60.34.10">
    <property type="entry name" value="Substrate Binding Domain Of DNAk, Chain A, domain 1"/>
    <property type="match status" value="1"/>
</dbReference>
<dbReference type="HAMAP" id="MF_00332">
    <property type="entry name" value="DnaK"/>
    <property type="match status" value="1"/>
</dbReference>
<dbReference type="InterPro" id="IPR043129">
    <property type="entry name" value="ATPase_NBD"/>
</dbReference>
<dbReference type="InterPro" id="IPR012725">
    <property type="entry name" value="Chaperone_DnaK"/>
</dbReference>
<dbReference type="InterPro" id="IPR018181">
    <property type="entry name" value="Heat_shock_70_CS"/>
</dbReference>
<dbReference type="InterPro" id="IPR029048">
    <property type="entry name" value="HSP70_C_sf"/>
</dbReference>
<dbReference type="InterPro" id="IPR029047">
    <property type="entry name" value="HSP70_peptide-bd_sf"/>
</dbReference>
<dbReference type="InterPro" id="IPR013126">
    <property type="entry name" value="Hsp_70_fam"/>
</dbReference>
<dbReference type="NCBIfam" id="NF001413">
    <property type="entry name" value="PRK00290.1"/>
    <property type="match status" value="1"/>
</dbReference>
<dbReference type="NCBIfam" id="NF003520">
    <property type="entry name" value="PRK05183.1"/>
    <property type="match status" value="1"/>
</dbReference>
<dbReference type="NCBIfam" id="TIGR02350">
    <property type="entry name" value="prok_dnaK"/>
    <property type="match status" value="1"/>
</dbReference>
<dbReference type="PANTHER" id="PTHR19375">
    <property type="entry name" value="HEAT SHOCK PROTEIN 70KDA"/>
    <property type="match status" value="1"/>
</dbReference>
<dbReference type="Pfam" id="PF00012">
    <property type="entry name" value="HSP70"/>
    <property type="match status" value="1"/>
</dbReference>
<dbReference type="PRINTS" id="PR00301">
    <property type="entry name" value="HEATSHOCK70"/>
</dbReference>
<dbReference type="SUPFAM" id="SSF53067">
    <property type="entry name" value="Actin-like ATPase domain"/>
    <property type="match status" value="2"/>
</dbReference>
<dbReference type="SUPFAM" id="SSF100934">
    <property type="entry name" value="Heat shock protein 70kD (HSP70), C-terminal subdomain"/>
    <property type="match status" value="1"/>
</dbReference>
<dbReference type="SUPFAM" id="SSF100920">
    <property type="entry name" value="Heat shock protein 70kD (HSP70), peptide-binding domain"/>
    <property type="match status" value="1"/>
</dbReference>
<dbReference type="PROSITE" id="PS00297">
    <property type="entry name" value="HSP70_1"/>
    <property type="match status" value="1"/>
</dbReference>
<dbReference type="PROSITE" id="PS00329">
    <property type="entry name" value="HSP70_2"/>
    <property type="match status" value="1"/>
</dbReference>
<dbReference type="PROSITE" id="PS01036">
    <property type="entry name" value="HSP70_3"/>
    <property type="match status" value="1"/>
</dbReference>
<gene>
    <name evidence="1" type="primary">dnaK</name>
    <name type="ordered locus">OCAR_4417</name>
    <name type="ordered locus">OCA5_c01140</name>
</gene>
<comment type="function">
    <text evidence="1">Acts as a chaperone.</text>
</comment>
<comment type="induction">
    <text evidence="1">By stress conditions e.g. heat shock.</text>
</comment>
<comment type="similarity">
    <text evidence="1">Belongs to the heat shock protein 70 family.</text>
</comment>
<feature type="chain" id="PRO_1000119736" description="Chaperone protein DnaK">
    <location>
        <begin position="1"/>
        <end position="637"/>
    </location>
</feature>
<feature type="region of interest" description="Disordered" evidence="2">
    <location>
        <begin position="597"/>
        <end position="637"/>
    </location>
</feature>
<feature type="compositionally biased region" description="Basic and acidic residues" evidence="2">
    <location>
        <begin position="605"/>
        <end position="619"/>
    </location>
</feature>
<feature type="compositionally biased region" description="Acidic residues" evidence="2">
    <location>
        <begin position="620"/>
        <end position="630"/>
    </location>
</feature>
<feature type="modified residue" description="Phosphothreonine; by autocatalysis" evidence="1">
    <location>
        <position position="198"/>
    </location>
</feature>
<reference key="1">
    <citation type="journal article" date="2008" name="J. Bacteriol.">
        <title>Genome sequence of the chemolithoautotrophic bacterium Oligotropha carboxidovorans OM5T.</title>
        <authorList>
            <person name="Paul D."/>
            <person name="Bridges S."/>
            <person name="Burgess S.C."/>
            <person name="Dandass Y."/>
            <person name="Lawrence M.L."/>
        </authorList>
    </citation>
    <scope>NUCLEOTIDE SEQUENCE [LARGE SCALE GENOMIC DNA]</scope>
    <source>
        <strain>ATCC 49405 / DSM 1227 / KCTC 32145 / OM5</strain>
    </source>
</reference>
<reference key="2">
    <citation type="journal article" date="2011" name="J. Bacteriol.">
        <title>Complete genome sequences of the chemolithoautotrophic Oligotropha carboxidovorans strains OM4 and OM5.</title>
        <authorList>
            <person name="Volland S."/>
            <person name="Rachinger M."/>
            <person name="Strittmatter A."/>
            <person name="Daniel R."/>
            <person name="Gottschalk G."/>
            <person name="Meyer O."/>
        </authorList>
    </citation>
    <scope>NUCLEOTIDE SEQUENCE [LARGE SCALE GENOMIC DNA]</scope>
    <source>
        <strain>ATCC 49405 / DSM 1227 / KCTC 32145 / OM5</strain>
    </source>
</reference>
<evidence type="ECO:0000255" key="1">
    <source>
        <dbReference type="HAMAP-Rule" id="MF_00332"/>
    </source>
</evidence>
<evidence type="ECO:0000256" key="2">
    <source>
        <dbReference type="SAM" id="MobiDB-lite"/>
    </source>
</evidence>
<sequence length="637" mass="68506">MGKVIGIDLGTTNSCVAVMDGKSPRVIENAEGMRTTPSIVALTDDDERLVGQPAKRQAVTNPEKTIFAVKRLIGRRYDDPTVAKDKDLVPYKIVKASNGDAWVEADGKIYSPSQISAFILQKMKETAEAHLGQKVDQAVITVPAYFNDAQRQATKDAGKIAGLEVLRIINEPTAAALAYGLDKAKQGTIAVYDLGGGTFDVSVLEIGDGVFEVKSTNGDTFLGGEDFDMRLVGYLADEFQKEQGINLRNDKLALQRLKEAAEKAKIELSSTTQTEINLPFITADASGPKHLTMKLTRAKFEALVDDLVQKTIEPCRKALKDAGLSAGEISEVVLVGGMTRMPKIQEVVKQFFGKEPHKGVNPDEVVAIGAAIQAGVLQGDVKDVLLLDVTPLSLGIETLGGVFTRIIERNTTIPTKKSQVFSTAEDNQNAVTIRVFQGEREMAADNKALGQFDLMGIPPAPRGMPQIEVTFDIDANGIVNVSAKDKATGKEQQIRIQASGGLSESEIEKMVKEAEANAAEDKKRREAVDAKNHADALVHSTEKALAEHGSKVGEGERKAIEDALADLKEALKGDDSEAIKAKSNTLAQASMKLGEAMYQQQAEGDAARDAAQDAAKDDVVDAEFTEVDDDKNDKKSA</sequence>
<keyword id="KW-0067">ATP-binding</keyword>
<keyword id="KW-0143">Chaperone</keyword>
<keyword id="KW-0547">Nucleotide-binding</keyword>
<keyword id="KW-0597">Phosphoprotein</keyword>
<keyword id="KW-1185">Reference proteome</keyword>
<keyword id="KW-0346">Stress response</keyword>
<name>DNAK_AFIC5</name>